<comment type="function">
    <text evidence="1">Peptide chain release factor 2 directs the termination of translation in response to the peptide chain termination codons UGA and UAA.</text>
</comment>
<comment type="subcellular location">
    <subcellularLocation>
        <location evidence="1">Cytoplasm</location>
    </subcellularLocation>
</comment>
<comment type="PTM">
    <text evidence="1">Methylated by PrmC. Methylation increases the termination efficiency of RF2.</text>
</comment>
<comment type="similarity">
    <text evidence="1">Belongs to the prokaryotic/mitochondrial release factor family.</text>
</comment>
<reference key="1">
    <citation type="journal article" date="2009" name="PLoS Genet.">
        <title>Adaptations to submarine hydrothermal environments exemplified by the genome of Nautilia profundicola.</title>
        <authorList>
            <person name="Campbell B.J."/>
            <person name="Smith J.L."/>
            <person name="Hanson T.E."/>
            <person name="Klotz M.G."/>
            <person name="Stein L.Y."/>
            <person name="Lee C.K."/>
            <person name="Wu D."/>
            <person name="Robinson J.M."/>
            <person name="Khouri H.M."/>
            <person name="Eisen J.A."/>
            <person name="Cary S.C."/>
        </authorList>
    </citation>
    <scope>NUCLEOTIDE SEQUENCE [LARGE SCALE GENOMIC DNA]</scope>
    <source>
        <strain>ATCC BAA-1463 / DSM 18972 / AmH</strain>
    </source>
</reference>
<feature type="chain" id="PRO_1000193556" description="Peptide chain release factor 2">
    <location>
        <begin position="1"/>
        <end position="367"/>
    </location>
</feature>
<feature type="modified residue" description="N5-methylglutamine" evidence="1">
    <location>
        <position position="251"/>
    </location>
</feature>
<name>RF2_NAUPA</name>
<accession>B9L5Y7</accession>
<dbReference type="EMBL" id="CP001279">
    <property type="protein sequence ID" value="ACM93542.1"/>
    <property type="molecule type" value="Genomic_DNA"/>
</dbReference>
<dbReference type="RefSeq" id="WP_015902594.1">
    <property type="nucleotide sequence ID" value="NC_012115.1"/>
</dbReference>
<dbReference type="SMR" id="B9L5Y7"/>
<dbReference type="STRING" id="598659.NAMH_1382"/>
<dbReference type="KEGG" id="nam:NAMH_1382"/>
<dbReference type="eggNOG" id="COG1186">
    <property type="taxonomic scope" value="Bacteria"/>
</dbReference>
<dbReference type="HOGENOM" id="CLU_036856_6_0_7"/>
<dbReference type="OrthoDB" id="9806673at2"/>
<dbReference type="Proteomes" id="UP000000448">
    <property type="component" value="Chromosome"/>
</dbReference>
<dbReference type="GO" id="GO:0005737">
    <property type="term" value="C:cytoplasm"/>
    <property type="evidence" value="ECO:0007669"/>
    <property type="project" value="UniProtKB-SubCell"/>
</dbReference>
<dbReference type="GO" id="GO:0016149">
    <property type="term" value="F:translation release factor activity, codon specific"/>
    <property type="evidence" value="ECO:0007669"/>
    <property type="project" value="UniProtKB-UniRule"/>
</dbReference>
<dbReference type="FunFam" id="3.30.160.20:FF:000010">
    <property type="entry name" value="Peptide chain release factor 2"/>
    <property type="match status" value="1"/>
</dbReference>
<dbReference type="Gene3D" id="3.30.160.20">
    <property type="match status" value="1"/>
</dbReference>
<dbReference type="Gene3D" id="3.30.70.1660">
    <property type="match status" value="1"/>
</dbReference>
<dbReference type="Gene3D" id="1.20.58.410">
    <property type="entry name" value="Release factor"/>
    <property type="match status" value="1"/>
</dbReference>
<dbReference type="HAMAP" id="MF_00094">
    <property type="entry name" value="Rel_fac_2"/>
    <property type="match status" value="1"/>
</dbReference>
<dbReference type="InterPro" id="IPR005139">
    <property type="entry name" value="PCRF"/>
</dbReference>
<dbReference type="InterPro" id="IPR000352">
    <property type="entry name" value="Pep_chain_release_fac_I"/>
</dbReference>
<dbReference type="InterPro" id="IPR045853">
    <property type="entry name" value="Pep_chain_release_fac_I_sf"/>
</dbReference>
<dbReference type="InterPro" id="IPR004374">
    <property type="entry name" value="PrfB"/>
</dbReference>
<dbReference type="NCBIfam" id="TIGR00020">
    <property type="entry name" value="prfB"/>
    <property type="match status" value="1"/>
</dbReference>
<dbReference type="PANTHER" id="PTHR43116:SF3">
    <property type="entry name" value="CLASS I PEPTIDE CHAIN RELEASE FACTOR"/>
    <property type="match status" value="1"/>
</dbReference>
<dbReference type="PANTHER" id="PTHR43116">
    <property type="entry name" value="PEPTIDE CHAIN RELEASE FACTOR 2"/>
    <property type="match status" value="1"/>
</dbReference>
<dbReference type="Pfam" id="PF03462">
    <property type="entry name" value="PCRF"/>
    <property type="match status" value="1"/>
</dbReference>
<dbReference type="Pfam" id="PF00472">
    <property type="entry name" value="RF-1"/>
    <property type="match status" value="1"/>
</dbReference>
<dbReference type="SMART" id="SM00937">
    <property type="entry name" value="PCRF"/>
    <property type="match status" value="1"/>
</dbReference>
<dbReference type="SUPFAM" id="SSF75620">
    <property type="entry name" value="Release factor"/>
    <property type="match status" value="1"/>
</dbReference>
<dbReference type="PROSITE" id="PS00745">
    <property type="entry name" value="RF_PROK_I"/>
    <property type="match status" value="1"/>
</dbReference>
<organism>
    <name type="scientific">Nautilia profundicola (strain ATCC BAA-1463 / DSM 18972 / AmH)</name>
    <dbReference type="NCBI Taxonomy" id="598659"/>
    <lineage>
        <taxon>Bacteria</taxon>
        <taxon>Pseudomonadati</taxon>
        <taxon>Campylobacterota</taxon>
        <taxon>Epsilonproteobacteria</taxon>
        <taxon>Nautiliales</taxon>
        <taxon>Nautiliaceae</taxon>
        <taxon>Nautilia</taxon>
    </lineage>
</organism>
<evidence type="ECO:0000255" key="1">
    <source>
        <dbReference type="HAMAP-Rule" id="MF_00094"/>
    </source>
</evidence>
<sequence length="367" mass="42165">MDAYEYSELIKELENKIENIESILKPEKLEARLKEIEELENSPDFWNDPKTSAKVQKEKNAILRKLEKYKKAKTALQDNKDMFELASMEEDEETLNEVFNDVQDLKKIIRDLEIEVMLSDENDAKNAIISIHPGAGGTESHDWASILYRMYLRYAERRGWKVEVLDYQAGDEAGIKDVSFLVKGENAYGYLKAENGIHRLVRVSPFDSGGRRHTSFASVQVSPEIDDDIEIEIDPKDIRIDVFRASGAGGQHVNKTESAVRITHIPTGIVVGCQTDRSQHKNKDMAMKMLKSKLYELELEKRKAEEEGKPKDEMGWGHQIRSYVLFPYQQVKDNRSNKAYSRVDDILDGDLDEVIEDVLIAEKEHEN</sequence>
<protein>
    <recommendedName>
        <fullName evidence="1">Peptide chain release factor 2</fullName>
        <shortName evidence="1">RF-2</shortName>
    </recommendedName>
</protein>
<proteinExistence type="inferred from homology"/>
<keyword id="KW-0963">Cytoplasm</keyword>
<keyword id="KW-0488">Methylation</keyword>
<keyword id="KW-0648">Protein biosynthesis</keyword>
<gene>
    <name evidence="1" type="primary">prfB</name>
    <name type="ordered locus">NAMH_1382</name>
</gene>